<proteinExistence type="inferred from homology"/>
<accession>Q2TW34</accession>
<evidence type="ECO:0000255" key="1">
    <source>
        <dbReference type="HAMAP-Rule" id="MF_03108"/>
    </source>
</evidence>
<evidence type="ECO:0000256" key="2">
    <source>
        <dbReference type="SAM" id="MobiDB-lite"/>
    </source>
</evidence>
<reference key="1">
    <citation type="journal article" date="2005" name="Nature">
        <title>Genome sequencing and analysis of Aspergillus oryzae.</title>
        <authorList>
            <person name="Machida M."/>
            <person name="Asai K."/>
            <person name="Sano M."/>
            <person name="Tanaka T."/>
            <person name="Kumagai T."/>
            <person name="Terai G."/>
            <person name="Kusumoto K."/>
            <person name="Arima T."/>
            <person name="Akita O."/>
            <person name="Kashiwagi Y."/>
            <person name="Abe K."/>
            <person name="Gomi K."/>
            <person name="Horiuchi H."/>
            <person name="Kitamoto K."/>
            <person name="Kobayashi T."/>
            <person name="Takeuchi M."/>
            <person name="Denning D.W."/>
            <person name="Galagan J.E."/>
            <person name="Nierman W.C."/>
            <person name="Yu J."/>
            <person name="Archer D.B."/>
            <person name="Bennett J.W."/>
            <person name="Bhatnagar D."/>
            <person name="Cleveland T.E."/>
            <person name="Fedorova N.D."/>
            <person name="Gotoh O."/>
            <person name="Horikawa H."/>
            <person name="Hosoyama A."/>
            <person name="Ichinomiya M."/>
            <person name="Igarashi R."/>
            <person name="Iwashita K."/>
            <person name="Juvvadi P.R."/>
            <person name="Kato M."/>
            <person name="Kato Y."/>
            <person name="Kin T."/>
            <person name="Kokubun A."/>
            <person name="Maeda H."/>
            <person name="Maeyama N."/>
            <person name="Maruyama J."/>
            <person name="Nagasaki H."/>
            <person name="Nakajima T."/>
            <person name="Oda K."/>
            <person name="Okada K."/>
            <person name="Paulsen I."/>
            <person name="Sakamoto K."/>
            <person name="Sawano T."/>
            <person name="Takahashi M."/>
            <person name="Takase K."/>
            <person name="Terabayashi Y."/>
            <person name="Wortman J.R."/>
            <person name="Yamada O."/>
            <person name="Yamagata Y."/>
            <person name="Anazawa H."/>
            <person name="Hata Y."/>
            <person name="Koide Y."/>
            <person name="Komori T."/>
            <person name="Koyama Y."/>
            <person name="Minetoki T."/>
            <person name="Suharnan S."/>
            <person name="Tanaka A."/>
            <person name="Isono K."/>
            <person name="Kuhara S."/>
            <person name="Ogasawara N."/>
            <person name="Kikuchi H."/>
        </authorList>
    </citation>
    <scope>NUCLEOTIDE SEQUENCE [LARGE SCALE GENOMIC DNA]</scope>
    <source>
        <strain>ATCC 42149 / RIB 40</strain>
    </source>
</reference>
<feature type="chain" id="PRO_0000354102" description="Catalase-peroxidase">
    <location>
        <begin position="1"/>
        <end position="751"/>
    </location>
</feature>
<feature type="region of interest" description="Disordered" evidence="2">
    <location>
        <begin position="1"/>
        <end position="24"/>
    </location>
</feature>
<feature type="active site" description="Proton acceptor" evidence="1">
    <location>
        <position position="96"/>
    </location>
</feature>
<feature type="binding site" description="axial binding residue" evidence="1">
    <location>
        <position position="282"/>
    </location>
    <ligand>
        <name>heme b</name>
        <dbReference type="ChEBI" id="CHEBI:60344"/>
    </ligand>
    <ligandPart>
        <name>Fe</name>
        <dbReference type="ChEBI" id="CHEBI:18248"/>
    </ligandPart>
</feature>
<feature type="site" description="Transition state stabilizer" evidence="1">
    <location>
        <position position="92"/>
    </location>
</feature>
<feature type="cross-link" description="Tryptophyl-tyrosyl-methioninium (Trp-Tyr) (with M-267)" evidence="1">
    <location>
        <begin position="95"/>
        <end position="241"/>
    </location>
</feature>
<feature type="cross-link" description="Tryptophyl-tyrosyl-methioninium (Tyr-Met) (with W-95)" evidence="1">
    <location>
        <begin position="241"/>
        <end position="267"/>
    </location>
</feature>
<name>KATG_ASPOR</name>
<keyword id="KW-0963">Cytoplasm</keyword>
<keyword id="KW-0349">Heme</keyword>
<keyword id="KW-0376">Hydrogen peroxide</keyword>
<keyword id="KW-0408">Iron</keyword>
<keyword id="KW-0479">Metal-binding</keyword>
<keyword id="KW-0560">Oxidoreductase</keyword>
<keyword id="KW-0575">Peroxidase</keyword>
<keyword id="KW-1185">Reference proteome</keyword>
<organism>
    <name type="scientific">Aspergillus oryzae (strain ATCC 42149 / RIB 40)</name>
    <name type="common">Yellow koji mold</name>
    <dbReference type="NCBI Taxonomy" id="510516"/>
    <lineage>
        <taxon>Eukaryota</taxon>
        <taxon>Fungi</taxon>
        <taxon>Dikarya</taxon>
        <taxon>Ascomycota</taxon>
        <taxon>Pezizomycotina</taxon>
        <taxon>Eurotiomycetes</taxon>
        <taxon>Eurotiomycetidae</taxon>
        <taxon>Eurotiales</taxon>
        <taxon>Aspergillaceae</taxon>
        <taxon>Aspergillus</taxon>
        <taxon>Aspergillus subgen. Circumdati</taxon>
    </lineage>
</organism>
<dbReference type="EC" id="1.11.1.21" evidence="1"/>
<dbReference type="EMBL" id="BA000056">
    <property type="protein sequence ID" value="BAE66539.1"/>
    <property type="molecule type" value="Genomic_DNA"/>
</dbReference>
<dbReference type="RefSeq" id="XP_001827672.1">
    <property type="nucleotide sequence ID" value="XM_001827620.2"/>
</dbReference>
<dbReference type="SMR" id="Q2TW34"/>
<dbReference type="STRING" id="510516.Q2TW34"/>
<dbReference type="PeroxiBase" id="3448">
    <property type="entry name" value="AorCP01"/>
</dbReference>
<dbReference type="EnsemblFungi" id="BAE66539">
    <property type="protein sequence ID" value="BAE66539"/>
    <property type="gene ID" value="AO090010000722"/>
</dbReference>
<dbReference type="GeneID" id="5999806"/>
<dbReference type="KEGG" id="aor:AO090010000722"/>
<dbReference type="VEuPathDB" id="FungiDB:AO090010000722"/>
<dbReference type="HOGENOM" id="CLU_025424_2_0_1"/>
<dbReference type="OMA" id="GPETTWL"/>
<dbReference type="OrthoDB" id="49144at5052"/>
<dbReference type="Proteomes" id="UP000006564">
    <property type="component" value="Chromosome 8"/>
</dbReference>
<dbReference type="GO" id="GO:0005829">
    <property type="term" value="C:cytosol"/>
    <property type="evidence" value="ECO:0007669"/>
    <property type="project" value="TreeGrafter"/>
</dbReference>
<dbReference type="GO" id="GO:0004096">
    <property type="term" value="F:catalase activity"/>
    <property type="evidence" value="ECO:0007669"/>
    <property type="project" value="UniProtKB-UniRule"/>
</dbReference>
<dbReference type="GO" id="GO:0020037">
    <property type="term" value="F:heme binding"/>
    <property type="evidence" value="ECO:0007669"/>
    <property type="project" value="InterPro"/>
</dbReference>
<dbReference type="GO" id="GO:0046872">
    <property type="term" value="F:metal ion binding"/>
    <property type="evidence" value="ECO:0007669"/>
    <property type="project" value="UniProtKB-KW"/>
</dbReference>
<dbReference type="GO" id="GO:0070301">
    <property type="term" value="P:cellular response to hydrogen peroxide"/>
    <property type="evidence" value="ECO:0007669"/>
    <property type="project" value="TreeGrafter"/>
</dbReference>
<dbReference type="GO" id="GO:0042744">
    <property type="term" value="P:hydrogen peroxide catabolic process"/>
    <property type="evidence" value="ECO:0007669"/>
    <property type="project" value="UniProtKB-KW"/>
</dbReference>
<dbReference type="CDD" id="cd00649">
    <property type="entry name" value="catalase_peroxidase_1"/>
    <property type="match status" value="1"/>
</dbReference>
<dbReference type="CDD" id="cd08200">
    <property type="entry name" value="catalase_peroxidase_2"/>
    <property type="match status" value="1"/>
</dbReference>
<dbReference type="FunFam" id="1.10.420.10:FF:000002">
    <property type="entry name" value="Catalase-peroxidase"/>
    <property type="match status" value="1"/>
</dbReference>
<dbReference type="FunFam" id="1.10.420.10:FF:000004">
    <property type="entry name" value="Catalase-peroxidase"/>
    <property type="match status" value="1"/>
</dbReference>
<dbReference type="FunFam" id="1.10.520.10:FF:000002">
    <property type="entry name" value="Catalase-peroxidase"/>
    <property type="match status" value="1"/>
</dbReference>
<dbReference type="Gene3D" id="1.10.520.10">
    <property type="match status" value="2"/>
</dbReference>
<dbReference type="Gene3D" id="1.10.420.10">
    <property type="entry name" value="Peroxidase, domain 2"/>
    <property type="match status" value="2"/>
</dbReference>
<dbReference type="HAMAP" id="MF_01961">
    <property type="entry name" value="Catal_peroxid"/>
    <property type="match status" value="1"/>
</dbReference>
<dbReference type="InterPro" id="IPR000763">
    <property type="entry name" value="Catalase_peroxidase"/>
</dbReference>
<dbReference type="InterPro" id="IPR002016">
    <property type="entry name" value="Haem_peroxidase"/>
</dbReference>
<dbReference type="InterPro" id="IPR010255">
    <property type="entry name" value="Haem_peroxidase_sf"/>
</dbReference>
<dbReference type="InterPro" id="IPR019794">
    <property type="entry name" value="Peroxidases_AS"/>
</dbReference>
<dbReference type="InterPro" id="IPR019793">
    <property type="entry name" value="Peroxidases_heam-ligand_BS"/>
</dbReference>
<dbReference type="NCBIfam" id="TIGR00198">
    <property type="entry name" value="cat_per_HPI"/>
    <property type="match status" value="1"/>
</dbReference>
<dbReference type="NCBIfam" id="NF011635">
    <property type="entry name" value="PRK15061.1"/>
    <property type="match status" value="1"/>
</dbReference>
<dbReference type="PANTHER" id="PTHR30555:SF0">
    <property type="entry name" value="CATALASE-PEROXIDASE"/>
    <property type="match status" value="1"/>
</dbReference>
<dbReference type="PANTHER" id="PTHR30555">
    <property type="entry name" value="HYDROPEROXIDASE I, BIFUNCTIONAL CATALASE-PEROXIDASE"/>
    <property type="match status" value="1"/>
</dbReference>
<dbReference type="Pfam" id="PF00141">
    <property type="entry name" value="peroxidase"/>
    <property type="match status" value="2"/>
</dbReference>
<dbReference type="PRINTS" id="PR00460">
    <property type="entry name" value="BPEROXIDASE"/>
</dbReference>
<dbReference type="PRINTS" id="PR00458">
    <property type="entry name" value="PEROXIDASE"/>
</dbReference>
<dbReference type="SUPFAM" id="SSF48113">
    <property type="entry name" value="Heme-dependent peroxidases"/>
    <property type="match status" value="2"/>
</dbReference>
<dbReference type="PROSITE" id="PS00435">
    <property type="entry name" value="PEROXIDASE_1"/>
    <property type="match status" value="1"/>
</dbReference>
<dbReference type="PROSITE" id="PS00436">
    <property type="entry name" value="PEROXIDASE_2"/>
    <property type="match status" value="1"/>
</dbReference>
<dbReference type="PROSITE" id="PS50873">
    <property type="entry name" value="PEROXIDASE_4"/>
    <property type="match status" value="1"/>
</dbReference>
<gene>
    <name evidence="1" type="primary">katG</name>
    <name type="ORF">AO090010000722</name>
</gene>
<comment type="function">
    <text evidence="1">Bifunctional enzyme with both catalase and broad-spectrum peroxidase activity.</text>
</comment>
<comment type="catalytic activity">
    <reaction evidence="1">
        <text>H2O2 + AH2 = A + 2 H2O</text>
        <dbReference type="Rhea" id="RHEA:30275"/>
        <dbReference type="ChEBI" id="CHEBI:13193"/>
        <dbReference type="ChEBI" id="CHEBI:15377"/>
        <dbReference type="ChEBI" id="CHEBI:16240"/>
        <dbReference type="ChEBI" id="CHEBI:17499"/>
        <dbReference type="EC" id="1.11.1.21"/>
    </reaction>
</comment>
<comment type="catalytic activity">
    <reaction evidence="1">
        <text>2 H2O2 = O2 + 2 H2O</text>
        <dbReference type="Rhea" id="RHEA:20309"/>
        <dbReference type="ChEBI" id="CHEBI:15377"/>
        <dbReference type="ChEBI" id="CHEBI:15379"/>
        <dbReference type="ChEBI" id="CHEBI:16240"/>
        <dbReference type="EC" id="1.11.1.21"/>
    </reaction>
</comment>
<comment type="cofactor">
    <cofactor evidence="1">
        <name>heme b</name>
        <dbReference type="ChEBI" id="CHEBI:60344"/>
    </cofactor>
    <text evidence="1">Binds 1 heme b (iron(II)-protoporphyrin IX) group per monomer.</text>
</comment>
<comment type="subunit">
    <text evidence="1">Homodimer or homotetramer.</text>
</comment>
<comment type="subcellular location">
    <subcellularLocation>
        <location evidence="1">Cytoplasm</location>
    </subcellularLocation>
</comment>
<comment type="PTM">
    <text evidence="1">Formation of the three residue Trp-Tyr-Met cross-link is important for the catalase, but not the peroxidase activity of the enzyme.</text>
</comment>
<comment type="similarity">
    <text evidence="1">Belongs to the peroxidase family. Peroxidase/catalase subfamily.</text>
</comment>
<protein>
    <recommendedName>
        <fullName evidence="1">Catalase-peroxidase</fullName>
        <shortName evidence="1">CP</shortName>
        <ecNumber evidence="1">1.11.1.21</ecNumber>
    </recommendedName>
    <alternativeName>
        <fullName evidence="1">Peroxidase/catalase</fullName>
    </alternativeName>
</protein>
<sequence length="751" mass="82628">MADKCPFHNQAPKPNVAGSGTQNRDWWPDQLKLNILRQHTTVSNPLDPDFDYAAAFNSLDYYALKKDLQDLMTDSQDWWPADFGHYGGLFIRMAWHSAGTYRTFDGRGGGGQGQQRFAPLNSWPDNVSLDKARRLLWPIKQKYGNKISWADLMILTGNVALESMGFKTFGFAGGRKDTWEADESVYWGGETTWLGNDVRYSHGFAGSSKHGAVIADEASHRDIHSRELEKPLAAAHMGLIYVNPEGPDGNPDPVAAARDIRTTFARMAMNDEETVALIAGGHTFGKTHGAASSDHVGSEPEAAGLEAQGLGWQNSHGSGKGAHTITSGLEVTWTKTPTQWNLNFLEYLFRFEWVLTKSPAGANQWVAKDADAFIPDAYDSSKKHRPQMLTTDLSLRFDPAYEKISRRFLENPDQFAEAFARAWFKLTHRDMGPRARYIGPEVPAEELSWQDPIPAVNHPVISETDIAALKRDILATGVDPSKFISTAWASASTFRGSDKRGGANGARIRLAPQRDWEVNNQPWLAAALKALEDIQDKFNSAQNDGKRVSLADLIVLAGCAAVEKAASDAGHIITVPFTPGRMDASQDQTDVESFNQMEPVADGFRNYGTSTARVPAEHYLVDKAQLLTLSAPEMTVLVGGLRALNANYDGSAHGVFTTRPGQLTNDFFVNLLDMNTSWKASGSGNDIYEGTDRRTGSKKWTATRADLVFGSHAELRAIAEVYGSSDGKGKFVKDFVAAWAKVMNLDRFDVN</sequence>